<comment type="function">
    <text evidence="1">Removes the formyl group from the N-terminal Met of newly synthesized proteins. Requires at least a dipeptide for an efficient rate of reaction. N-terminal L-methionine is a prerequisite for activity but the enzyme has broad specificity at other positions.</text>
</comment>
<comment type="catalytic activity">
    <reaction evidence="1">
        <text>N-terminal N-formyl-L-methionyl-[peptide] + H2O = N-terminal L-methionyl-[peptide] + formate</text>
        <dbReference type="Rhea" id="RHEA:24420"/>
        <dbReference type="Rhea" id="RHEA-COMP:10639"/>
        <dbReference type="Rhea" id="RHEA-COMP:10640"/>
        <dbReference type="ChEBI" id="CHEBI:15377"/>
        <dbReference type="ChEBI" id="CHEBI:15740"/>
        <dbReference type="ChEBI" id="CHEBI:49298"/>
        <dbReference type="ChEBI" id="CHEBI:64731"/>
        <dbReference type="EC" id="3.5.1.88"/>
    </reaction>
</comment>
<comment type="cofactor">
    <cofactor evidence="1">
        <name>Fe(2+)</name>
        <dbReference type="ChEBI" id="CHEBI:29033"/>
    </cofactor>
    <text evidence="1">Binds 1 Fe(2+) ion.</text>
</comment>
<comment type="similarity">
    <text evidence="1">Belongs to the polypeptide deformylase family.</text>
</comment>
<proteinExistence type="inferred from homology"/>
<name>DEF_HAEIE</name>
<organism>
    <name type="scientific">Haemophilus influenzae (strain PittEE)</name>
    <dbReference type="NCBI Taxonomy" id="374930"/>
    <lineage>
        <taxon>Bacteria</taxon>
        <taxon>Pseudomonadati</taxon>
        <taxon>Pseudomonadota</taxon>
        <taxon>Gammaproteobacteria</taxon>
        <taxon>Pasteurellales</taxon>
        <taxon>Pasteurellaceae</taxon>
        <taxon>Haemophilus</taxon>
    </lineage>
</organism>
<evidence type="ECO:0000255" key="1">
    <source>
        <dbReference type="HAMAP-Rule" id="MF_00163"/>
    </source>
</evidence>
<accession>A5UEB4</accession>
<gene>
    <name evidence="1" type="primary">def</name>
    <name type="ordered locus">CGSHiEE_09120</name>
</gene>
<sequence length="169" mass="19058">MTALNVLIYPDDHLKVVCEPVTEVNDAIRKIVDDMFDTMYQEKGIGLAAPQVDILQRIITIDVEGDKQNQFVLINPEILASEGETGIEEGCLSIPGFRALVPRKEKVTVRALDRDGKEFTLDADGLLAICIQHEIDHLNGILFVDYLSPLKRQRIKEKLIKYKKQIAKS</sequence>
<dbReference type="EC" id="3.5.1.88" evidence="1"/>
<dbReference type="EMBL" id="CP000671">
    <property type="protein sequence ID" value="ABQ99115.1"/>
    <property type="molecule type" value="Genomic_DNA"/>
</dbReference>
<dbReference type="SMR" id="A5UEB4"/>
<dbReference type="KEGG" id="hip:CGSHiEE_09120"/>
<dbReference type="HOGENOM" id="CLU_061901_2_1_6"/>
<dbReference type="GO" id="GO:0046872">
    <property type="term" value="F:metal ion binding"/>
    <property type="evidence" value="ECO:0007669"/>
    <property type="project" value="UniProtKB-KW"/>
</dbReference>
<dbReference type="GO" id="GO:0042586">
    <property type="term" value="F:peptide deformylase activity"/>
    <property type="evidence" value="ECO:0007669"/>
    <property type="project" value="UniProtKB-UniRule"/>
</dbReference>
<dbReference type="GO" id="GO:0043686">
    <property type="term" value="P:co-translational protein modification"/>
    <property type="evidence" value="ECO:0007669"/>
    <property type="project" value="TreeGrafter"/>
</dbReference>
<dbReference type="GO" id="GO:0006412">
    <property type="term" value="P:translation"/>
    <property type="evidence" value="ECO:0007669"/>
    <property type="project" value="UniProtKB-UniRule"/>
</dbReference>
<dbReference type="CDD" id="cd00487">
    <property type="entry name" value="Pep_deformylase"/>
    <property type="match status" value="1"/>
</dbReference>
<dbReference type="FunFam" id="3.90.45.10:FF:000001">
    <property type="entry name" value="Peptide deformylase"/>
    <property type="match status" value="1"/>
</dbReference>
<dbReference type="Gene3D" id="3.90.45.10">
    <property type="entry name" value="Peptide deformylase"/>
    <property type="match status" value="1"/>
</dbReference>
<dbReference type="HAMAP" id="MF_00163">
    <property type="entry name" value="Pep_deformylase"/>
    <property type="match status" value="1"/>
</dbReference>
<dbReference type="InterPro" id="IPR023635">
    <property type="entry name" value="Peptide_deformylase"/>
</dbReference>
<dbReference type="InterPro" id="IPR036821">
    <property type="entry name" value="Peptide_deformylase_sf"/>
</dbReference>
<dbReference type="NCBIfam" id="TIGR00079">
    <property type="entry name" value="pept_deformyl"/>
    <property type="match status" value="1"/>
</dbReference>
<dbReference type="NCBIfam" id="NF001159">
    <property type="entry name" value="PRK00150.1-3"/>
    <property type="match status" value="1"/>
</dbReference>
<dbReference type="PANTHER" id="PTHR10458">
    <property type="entry name" value="PEPTIDE DEFORMYLASE"/>
    <property type="match status" value="1"/>
</dbReference>
<dbReference type="PANTHER" id="PTHR10458:SF21">
    <property type="entry name" value="PEPTIDE DEFORMYLASE"/>
    <property type="match status" value="1"/>
</dbReference>
<dbReference type="Pfam" id="PF01327">
    <property type="entry name" value="Pep_deformylase"/>
    <property type="match status" value="1"/>
</dbReference>
<dbReference type="PIRSF" id="PIRSF004749">
    <property type="entry name" value="Pep_def"/>
    <property type="match status" value="1"/>
</dbReference>
<dbReference type="PRINTS" id="PR01576">
    <property type="entry name" value="PDEFORMYLASE"/>
</dbReference>
<dbReference type="SUPFAM" id="SSF56420">
    <property type="entry name" value="Peptide deformylase"/>
    <property type="match status" value="1"/>
</dbReference>
<protein>
    <recommendedName>
        <fullName evidence="1">Peptide deformylase</fullName>
        <shortName evidence="1">PDF</shortName>
        <ecNumber evidence="1">3.5.1.88</ecNumber>
    </recommendedName>
    <alternativeName>
        <fullName evidence="1">Polypeptide deformylase</fullName>
    </alternativeName>
</protein>
<keyword id="KW-0378">Hydrolase</keyword>
<keyword id="KW-0408">Iron</keyword>
<keyword id="KW-0479">Metal-binding</keyword>
<keyword id="KW-0648">Protein biosynthesis</keyword>
<reference key="1">
    <citation type="journal article" date="2007" name="Genome Biol.">
        <title>Characterization and modeling of the Haemophilus influenzae core and supragenomes based on the complete genomic sequences of Rd and 12 clinical nontypeable strains.</title>
        <authorList>
            <person name="Hogg J.S."/>
            <person name="Hu F.Z."/>
            <person name="Janto B."/>
            <person name="Boissy R."/>
            <person name="Hayes J."/>
            <person name="Keefe R."/>
            <person name="Post J.C."/>
            <person name="Ehrlich G.D."/>
        </authorList>
    </citation>
    <scope>NUCLEOTIDE SEQUENCE [LARGE SCALE GENOMIC DNA]</scope>
    <source>
        <strain>PittEE</strain>
    </source>
</reference>
<feature type="chain" id="PRO_1000023129" description="Peptide deformylase">
    <location>
        <begin position="1"/>
        <end position="169"/>
    </location>
</feature>
<feature type="active site" evidence="1">
    <location>
        <position position="134"/>
    </location>
</feature>
<feature type="binding site" evidence="1">
    <location>
        <position position="91"/>
    </location>
    <ligand>
        <name>Fe cation</name>
        <dbReference type="ChEBI" id="CHEBI:24875"/>
    </ligand>
</feature>
<feature type="binding site" evidence="1">
    <location>
        <position position="133"/>
    </location>
    <ligand>
        <name>Fe cation</name>
        <dbReference type="ChEBI" id="CHEBI:24875"/>
    </ligand>
</feature>
<feature type="binding site" evidence="1">
    <location>
        <position position="137"/>
    </location>
    <ligand>
        <name>Fe cation</name>
        <dbReference type="ChEBI" id="CHEBI:24875"/>
    </ligand>
</feature>